<reference key="1">
    <citation type="journal article" date="2011" name="J. Bacteriol.">
        <title>Comparative genomics of 28 Salmonella enterica isolates: evidence for CRISPR-mediated adaptive sublineage evolution.</title>
        <authorList>
            <person name="Fricke W.F."/>
            <person name="Mammel M.K."/>
            <person name="McDermott P.F."/>
            <person name="Tartera C."/>
            <person name="White D.G."/>
            <person name="Leclerc J.E."/>
            <person name="Ravel J."/>
            <person name="Cebula T.A."/>
        </authorList>
    </citation>
    <scope>NUCLEOTIDE SEQUENCE [LARGE SCALE GENOMIC DNA]</scope>
    <source>
        <strain>CT_02021853</strain>
    </source>
</reference>
<evidence type="ECO:0000255" key="1">
    <source>
        <dbReference type="HAMAP-Rule" id="MF_01626"/>
    </source>
</evidence>
<name>VIAA_SALDC</name>
<keyword id="KW-0143">Chaperone</keyword>
<keyword id="KW-0963">Cytoplasm</keyword>
<proteinExistence type="inferred from homology"/>
<feature type="chain" id="PRO_1000186157" description="Regulatory protein ViaA">
    <location>
        <begin position="1"/>
        <end position="483"/>
    </location>
</feature>
<organism>
    <name type="scientific">Salmonella dublin (strain CT_02021853)</name>
    <dbReference type="NCBI Taxonomy" id="439851"/>
    <lineage>
        <taxon>Bacteria</taxon>
        <taxon>Pseudomonadati</taxon>
        <taxon>Pseudomonadota</taxon>
        <taxon>Gammaproteobacteria</taxon>
        <taxon>Enterobacterales</taxon>
        <taxon>Enterobacteriaceae</taxon>
        <taxon>Salmonella</taxon>
    </lineage>
</organism>
<gene>
    <name evidence="1" type="primary">viaA</name>
    <name type="ordered locus">SeD_A4270</name>
</gene>
<accession>B5FN48</accession>
<dbReference type="EMBL" id="CP001144">
    <property type="protein sequence ID" value="ACH73915.1"/>
    <property type="molecule type" value="Genomic_DNA"/>
</dbReference>
<dbReference type="RefSeq" id="WP_000956588.1">
    <property type="nucleotide sequence ID" value="NC_011205.1"/>
</dbReference>
<dbReference type="SMR" id="B5FN48"/>
<dbReference type="KEGG" id="sed:SeD_A4270"/>
<dbReference type="HOGENOM" id="CLU_022130_0_0_6"/>
<dbReference type="Proteomes" id="UP000008322">
    <property type="component" value="Chromosome"/>
</dbReference>
<dbReference type="GO" id="GO:0005829">
    <property type="term" value="C:cytosol"/>
    <property type="evidence" value="ECO:0007669"/>
    <property type="project" value="TreeGrafter"/>
</dbReference>
<dbReference type="CDD" id="cd01462">
    <property type="entry name" value="VWA_YIEM_type"/>
    <property type="match status" value="1"/>
</dbReference>
<dbReference type="Gene3D" id="3.40.50.410">
    <property type="entry name" value="von Willebrand factor, type A domain"/>
    <property type="match status" value="1"/>
</dbReference>
<dbReference type="HAMAP" id="MF_01626">
    <property type="entry name" value="ViaA"/>
    <property type="match status" value="1"/>
</dbReference>
<dbReference type="InterPro" id="IPR008912">
    <property type="entry name" value="Uncharacterised_CoxE"/>
</dbReference>
<dbReference type="InterPro" id="IPR023481">
    <property type="entry name" value="Uncharacterised_ViaA"/>
</dbReference>
<dbReference type="InterPro" id="IPR002035">
    <property type="entry name" value="VWF_A"/>
</dbReference>
<dbReference type="InterPro" id="IPR036465">
    <property type="entry name" value="vWFA_dom_sf"/>
</dbReference>
<dbReference type="NCBIfam" id="NF008230">
    <property type="entry name" value="PRK10997.1"/>
    <property type="match status" value="1"/>
</dbReference>
<dbReference type="PANTHER" id="PTHR36846">
    <property type="entry name" value="PROTEIN VIAA"/>
    <property type="match status" value="1"/>
</dbReference>
<dbReference type="PANTHER" id="PTHR36846:SF1">
    <property type="entry name" value="PROTEIN VIAA"/>
    <property type="match status" value="1"/>
</dbReference>
<dbReference type="Pfam" id="PF05762">
    <property type="entry name" value="VWA_CoxE"/>
    <property type="match status" value="1"/>
</dbReference>
<dbReference type="SMART" id="SM00327">
    <property type="entry name" value="VWA"/>
    <property type="match status" value="1"/>
</dbReference>
<dbReference type="SUPFAM" id="SSF53300">
    <property type="entry name" value="vWA-like"/>
    <property type="match status" value="1"/>
</dbReference>
<sequence length="483" mass="55431">MLTLDTLNTMLAVSEEGMVEEMILALLASPQLVIFFEKFPRLKNAVTADLPRWREALRSRLKDARVPPELTEEVMCYQQSQLLSTPQFIVQLPQILALLHRLHSPYAAQAKQLTESNSTFTPALHTLFLQRWRLSLVVQATTLNQQLLEEEREQLLSDVQERMTLSGQLEPTLAENDNAAGRLWDMSAGQLKRGDYQLIVKYGEFLAAQPELMQLAEQLGRSREAKSVPKKDAPMETFRTLVREPATVPEQVDGIQQGDDILRLLPPELATLGITELEYEFYRRLVEKQLLTYRLHGEAWREKVTERPVVHQDVDEQPRGPFIVCVDTSGSMGGFNEQCAKAFCLALMRVALADNRRCFIMLFSTDVVRYELSGPEGIEQAIRFLSQRFRGGTDIASCFRAIIERMQGREWFDADAVVISDFIAQRLPDDVVSKVGELQRLHQHRFHAVAMSAHGKPGIMRIFDHIWRFDTGMRSRLLRRWRR</sequence>
<protein>
    <recommendedName>
        <fullName evidence="1">Regulatory protein ViaA</fullName>
    </recommendedName>
    <alternativeName>
        <fullName evidence="1">VWA interacting with AAA+ ATPase</fullName>
    </alternativeName>
</protein>
<comment type="function">
    <text evidence="1">Component of the RavA-ViaA chaperone complex, which may act on the membrane to optimize the function of some of the respiratory chains. ViaA stimulates the ATPase activity of RavA.</text>
</comment>
<comment type="subunit">
    <text evidence="1">Homodimer. Interacts with RavA.</text>
</comment>
<comment type="subcellular location">
    <subcellularLocation>
        <location evidence="1">Cytoplasm</location>
    </subcellularLocation>
</comment>
<comment type="similarity">
    <text evidence="1">Belongs to the ViaA family.</text>
</comment>